<feature type="chain" id="PRO_0000456336" description="(+)-borneol dehydrogenase 1">
    <location>
        <begin position="1"/>
        <end position="260"/>
    </location>
</feature>
<feature type="active site" description="Proton donor" evidence="2">
    <location>
        <position position="148"/>
    </location>
</feature>
<feature type="active site" description="Proton acceptor" evidence="4">
    <location>
        <position position="161"/>
    </location>
</feature>
<feature type="active site" description="Proton donor/acceptor" evidence="3">
    <location>
        <position position="165"/>
    </location>
</feature>
<feature type="binding site" evidence="8">
    <location>
        <begin position="20"/>
        <end position="26"/>
    </location>
    <ligand>
        <name>NAD(+)</name>
        <dbReference type="ChEBI" id="CHEBI:57540"/>
    </ligand>
</feature>
<feature type="binding site" evidence="1">
    <location>
        <position position="44"/>
    </location>
    <ligand>
        <name>NAD(+)</name>
        <dbReference type="ChEBI" id="CHEBI:57540"/>
    </ligand>
</feature>
<feature type="binding site" evidence="1">
    <location>
        <begin position="67"/>
        <end position="68"/>
    </location>
    <ligand>
        <name>NAD(+)</name>
        <dbReference type="ChEBI" id="CHEBI:57540"/>
    </ligand>
</feature>
<feature type="binding site" evidence="1">
    <location>
        <begin position="94"/>
        <end position="96"/>
    </location>
    <ligand>
        <name>NAD(+)</name>
        <dbReference type="ChEBI" id="CHEBI:57540"/>
    </ligand>
</feature>
<feature type="binding site" evidence="1">
    <location>
        <position position="161"/>
    </location>
    <ligand>
        <name>NAD(+)</name>
        <dbReference type="ChEBI" id="CHEBI:57540"/>
    </ligand>
</feature>
<feature type="binding site" evidence="1">
    <location>
        <position position="165"/>
    </location>
    <ligand>
        <name>NAD(+)</name>
        <dbReference type="ChEBI" id="CHEBI:57540"/>
    </ligand>
</feature>
<feature type="binding site" evidence="1">
    <location>
        <position position="196"/>
    </location>
    <ligand>
        <name>NAD(+)</name>
        <dbReference type="ChEBI" id="CHEBI:57540"/>
    </ligand>
</feature>
<dbReference type="EC" id="1.1.1.198" evidence="5"/>
<dbReference type="EMBL" id="MT525100">
    <property type="protein sequence ID" value="QXO33292.1"/>
    <property type="molecule type" value="mRNA"/>
</dbReference>
<dbReference type="SMR" id="A0A8F5SIS3"/>
<dbReference type="GO" id="GO:0047500">
    <property type="term" value="F:(+)-borneol dehydrogenase activity"/>
    <property type="evidence" value="ECO:0000314"/>
    <property type="project" value="UniProtKB"/>
</dbReference>
<dbReference type="GO" id="GO:0046211">
    <property type="term" value="P:(+)-camphor biosynthetic process"/>
    <property type="evidence" value="ECO:0000314"/>
    <property type="project" value="UniProtKB"/>
</dbReference>
<dbReference type="FunFam" id="3.40.50.720:FF:000084">
    <property type="entry name" value="Short-chain dehydrogenase reductase"/>
    <property type="match status" value="1"/>
</dbReference>
<dbReference type="Gene3D" id="3.40.50.720">
    <property type="entry name" value="NAD(P)-binding Rossmann-like Domain"/>
    <property type="match status" value="1"/>
</dbReference>
<dbReference type="InterPro" id="IPR036291">
    <property type="entry name" value="NAD(P)-bd_dom_sf"/>
</dbReference>
<dbReference type="InterPro" id="IPR020904">
    <property type="entry name" value="Sc_DH/Rdtase_CS"/>
</dbReference>
<dbReference type="InterPro" id="IPR002347">
    <property type="entry name" value="SDR_fam"/>
</dbReference>
<dbReference type="PANTHER" id="PTHR43180">
    <property type="entry name" value="3-OXOACYL-(ACYL-CARRIER-PROTEIN) REDUCTASE (AFU_ORTHOLOGUE AFUA_6G11210)"/>
    <property type="match status" value="1"/>
</dbReference>
<dbReference type="PANTHER" id="PTHR43180:SF37">
    <property type="entry name" value="TROPINONE REDUCTASE-LIKE 2"/>
    <property type="match status" value="1"/>
</dbReference>
<dbReference type="Pfam" id="PF13561">
    <property type="entry name" value="adh_short_C2"/>
    <property type="match status" value="1"/>
</dbReference>
<dbReference type="PRINTS" id="PR00081">
    <property type="entry name" value="GDHRDH"/>
</dbReference>
<dbReference type="PRINTS" id="PR00080">
    <property type="entry name" value="SDRFAMILY"/>
</dbReference>
<dbReference type="SUPFAM" id="SSF51735">
    <property type="entry name" value="NAD(P)-binding Rossmann-fold domains"/>
    <property type="match status" value="1"/>
</dbReference>
<dbReference type="PROSITE" id="PS00061">
    <property type="entry name" value="ADH_SHORT"/>
    <property type="match status" value="1"/>
</dbReference>
<organism>
    <name type="scientific">Salvia officinalis</name>
    <name type="common">Sage</name>
    <dbReference type="NCBI Taxonomy" id="38868"/>
    <lineage>
        <taxon>Eukaryota</taxon>
        <taxon>Viridiplantae</taxon>
        <taxon>Streptophyta</taxon>
        <taxon>Embryophyta</taxon>
        <taxon>Tracheophyta</taxon>
        <taxon>Spermatophyta</taxon>
        <taxon>Magnoliopsida</taxon>
        <taxon>eudicotyledons</taxon>
        <taxon>Gunneridae</taxon>
        <taxon>Pentapetalae</taxon>
        <taxon>asterids</taxon>
        <taxon>lamiids</taxon>
        <taxon>Lamiales</taxon>
        <taxon>Lamiaceae</taxon>
        <taxon>Nepetoideae</taxon>
        <taxon>Mentheae</taxon>
        <taxon>Salviinae</taxon>
        <taxon>Salvia</taxon>
        <taxon>Salvia incertae sedis</taxon>
    </lineage>
</organism>
<sequence>MNSSSAVSKRLEGKVAIVTGGASGIGASTVSLFHDHGAKVVIADIQDNLGQTLAGRLGRNISYIHCDVTDENQVRALVDATVAKHGGVDIMFSNAGIVEGPTVSIFDADKGALERLLGINLVGGFLAAKHAARVMSPTKKGCIIFTASACTEVAGISGPGYVASKYGIVGLMKSLAAELGSHGIRANCVSPFGVLTGIAAGDDKTKLMFEGLMSKVGNLKGKILTADDVAKAALYLASDEASYVSGVNLVLDGGYSVVNP</sequence>
<name>BDH1_SALOF</name>
<reference key="1">
    <citation type="journal article" date="2020" name="Phytochemistry">
        <title>Molecular cloning and functional characterization of a two highly stereoselective borneol dehydrogenases from Salvia officinalis L.</title>
        <authorList>
            <person name="Drienovska I."/>
            <person name="Kolanovic D."/>
            <person name="Chanique A."/>
            <person name="Sieber V."/>
            <person name="Hofer M."/>
            <person name="Kourist R."/>
        </authorList>
    </citation>
    <scope>NUCLEOTIDE SEQUENCE [MRNA]</scope>
    <scope>FUNCTION</scope>
    <scope>CATALYTIC ACTIVITY</scope>
</reference>
<comment type="function">
    <text evidence="5">Involved in the biosynthesis of monoterpene natural products related to camphor (PubMed:31927319). Catalayzes the oxidation of (+)-borneol to (+)-camphor (PubMed:31927319). Shows absolute selectivity towards (+)-borneol (PubMed:31927319). Catalyzes the oxidation of (+)-isoborneol to (-)-camphor (PubMed:31927319). Shows absolute selectivity towards (+)-isoborneol (PubMed:31927319).</text>
</comment>
<comment type="catalytic activity">
    <reaction evidence="5">
        <text>(1R,2S,4R)-borneol + NAD(+) = (1R,4R)-camphor + NADH + H(+)</text>
        <dbReference type="Rhea" id="RHEA:17329"/>
        <dbReference type="ChEBI" id="CHEBI:15378"/>
        <dbReference type="ChEBI" id="CHEBI:15393"/>
        <dbReference type="ChEBI" id="CHEBI:15396"/>
        <dbReference type="ChEBI" id="CHEBI:57540"/>
        <dbReference type="ChEBI" id="CHEBI:57945"/>
        <dbReference type="EC" id="1.1.1.198"/>
    </reaction>
    <physiologicalReaction direction="left-to-right" evidence="5">
        <dbReference type="Rhea" id="RHEA:17330"/>
    </physiologicalReaction>
</comment>
<comment type="similarity">
    <text evidence="7">Belongs to the short-chain dehydrogenases/reductases (SDR) family.</text>
</comment>
<gene>
    <name evidence="6" type="primary">BDH1</name>
</gene>
<evidence type="ECO:0000250" key="1">
    <source>
        <dbReference type="UniProtKB" id="I6Y778"/>
    </source>
</evidence>
<evidence type="ECO:0000250" key="2">
    <source>
        <dbReference type="UniProtKB" id="O93868"/>
    </source>
</evidence>
<evidence type="ECO:0000250" key="3">
    <source>
        <dbReference type="UniProtKB" id="P19337"/>
    </source>
</evidence>
<evidence type="ECO:0000255" key="4">
    <source>
        <dbReference type="PROSITE-ProRule" id="PRU10001"/>
    </source>
</evidence>
<evidence type="ECO:0000269" key="5">
    <source>
    </source>
</evidence>
<evidence type="ECO:0000303" key="6">
    <source>
    </source>
</evidence>
<evidence type="ECO:0000305" key="7"/>
<evidence type="ECO:0000305" key="8">
    <source>
    </source>
</evidence>
<protein>
    <recommendedName>
        <fullName evidence="6">(+)-borneol dehydrogenase 1</fullName>
        <shortName evidence="6">SoBDH1</shortName>
        <ecNumber evidence="5">1.1.1.198</ecNumber>
    </recommendedName>
</protein>
<keyword id="KW-0520">NAD</keyword>
<keyword id="KW-0560">Oxidoreductase</keyword>
<proteinExistence type="evidence at protein level"/>
<accession>A0A8F5SIS3</accession>